<keyword id="KW-1043">Host membrane</keyword>
<keyword id="KW-0472">Membrane</keyword>
<keyword id="KW-1185">Reference proteome</keyword>
<keyword id="KW-0812">Transmembrane</keyword>
<keyword id="KW-1133">Transmembrane helix</keyword>
<name>ORF1_SPV1C</name>
<organismHost>
    <name type="scientific">Spiroplasma melliferum</name>
    <dbReference type="NCBI Taxonomy" id="2134"/>
</organismHost>
<sequence>MRKSLSLFSIFILIFLGLVIPFITLTAFRPLNEEQYTLKQESSTGKGINETDFINTMFLRSSFFENWSETNYFINPTLKTSKNLLFNDKWYLDFLQDSYSTGVVYDKPNEVFLNYYQQWHSLKNRYMVEKFYDVKKENFLNDLIDFIYAFAVKYKMFNVSKEIVKNVDRYKENHYPRVKLNQDNWKLIDDIENVDKYKWEDETYIGITKIWKNKEWNWIIEDWKLHPPFSNVYLSSYKAIYRWTGVGKPQLPTIDKNTGEITDWNSYQQTRVKEFIDLSLYSVLLENTRVQQGGSADYENPNKVGTKRIIFDFETVDELDVKNIKKAIYRMILTVDEANLIISGSLELNNINNDDLSFNFSFMRTGMGEVFNFNGSIYSSLNSKDLKYYQQFSGQFDLSKFLQSFFASALVPVFQNRSSFIENGYIDNLQYDTVLVNFFALKLQNFNNILLSENINDKLQFDKLLNSMFKISQKFYTNYLRTIFDLENNTYVQGYNKKYGLLVNNGFKIYPRYFYFSDKYKQLDIKLYSAFKNRFYTINNYGSVFNYDFSVANNYNISLNSGYVFGGDLQNKYGLQYKKIEEQKIGYNVFELQAQKENDMYRYYDFNFGIYNWQEINNGGLFPDKQWWQVQYITPKGWWDFGAHIKNAVIWIVNTIPGVKQVNELASGVGKVFETVYSFFSQIFEVWKFNPALYSTITNIFLLIIFMKFVRLI</sequence>
<gene>
    <name type="ORF">ORF1</name>
</gene>
<dbReference type="EMBL" id="U28974">
    <property type="protein sequence ID" value="AAA85011.1"/>
    <property type="molecule type" value="Genomic_DNA"/>
</dbReference>
<dbReference type="RefSeq" id="NP_620625.1">
    <property type="nucleotide sequence ID" value="NC_003793.1"/>
</dbReference>
<dbReference type="SMR" id="Q88418"/>
<dbReference type="KEGG" id="vg:944361"/>
<dbReference type="OrthoDB" id="1060at10239"/>
<dbReference type="Proteomes" id="UP000001764">
    <property type="component" value="Genome"/>
</dbReference>
<dbReference type="GO" id="GO:0033644">
    <property type="term" value="C:host cell membrane"/>
    <property type="evidence" value="ECO:0007669"/>
    <property type="project" value="UniProtKB-SubCell"/>
</dbReference>
<dbReference type="GO" id="GO:0016020">
    <property type="term" value="C:membrane"/>
    <property type="evidence" value="ECO:0007669"/>
    <property type="project" value="UniProtKB-KW"/>
</dbReference>
<dbReference type="InterPro" id="IPR022160">
    <property type="entry name" value="Phage_1-C74_Orf1"/>
</dbReference>
<dbReference type="Pfam" id="PF12461">
    <property type="entry name" value="DUF3688"/>
    <property type="match status" value="1"/>
</dbReference>
<reference key="1">
    <citation type="journal article" date="1996" name="Curr. Microbiol.">
        <title>Spiroplasma citri Virus SpV1: Characterization of viral sequences present in the spiroplasmal host chromosome.</title>
        <authorList>
            <person name="Bebear C.M."/>
            <person name="Aullo P."/>
            <person name="Bove J."/>
            <person name="Renaudin J."/>
        </authorList>
    </citation>
    <scope>NUCLEOTIDE SEQUENCE [GENOMIC DNA]</scope>
</reference>
<protein>
    <recommendedName>
        <fullName>Uncharacterized protein ORF1</fullName>
    </recommendedName>
</protein>
<feature type="chain" id="PRO_0000372076" description="Uncharacterized protein ORF1">
    <location>
        <begin position="1"/>
        <end position="713"/>
    </location>
</feature>
<feature type="transmembrane region" description="Helical" evidence="1">
    <location>
        <begin position="686"/>
        <end position="706"/>
    </location>
</feature>
<organism>
    <name type="scientific">Spiroplasma virus SpV1-C74</name>
    <name type="common">SpV1</name>
    <dbReference type="NCBI Taxonomy" id="185959"/>
    <lineage>
        <taxon>Viruses</taxon>
        <taxon>Monodnaviria</taxon>
        <taxon>Loebvirae</taxon>
        <taxon>Hofneiviricota</taxon>
        <taxon>Faserviricetes</taxon>
        <taxon>Tubulavirales</taxon>
        <taxon>Plectroviridae</taxon>
        <taxon>Vespertiliovirus</taxon>
        <taxon>Vespertiliovirus C74</taxon>
    </lineage>
</organism>
<comment type="subcellular location">
    <subcellularLocation>
        <location evidence="2">Host membrane</location>
        <topology evidence="2">Single-pass membrane protein</topology>
    </subcellularLocation>
</comment>
<comment type="similarity">
    <text evidence="2">Belongs to the plectrovirus ORF1 family.</text>
</comment>
<accession>Q88418</accession>
<evidence type="ECO:0000255" key="1"/>
<evidence type="ECO:0000305" key="2"/>
<proteinExistence type="inferred from homology"/>